<dbReference type="EC" id="2.8.1.6" evidence="1"/>
<dbReference type="EMBL" id="AE017126">
    <property type="protein sequence ID" value="AAQ00147.1"/>
    <property type="molecule type" value="Genomic_DNA"/>
</dbReference>
<dbReference type="RefSeq" id="NP_875494.1">
    <property type="nucleotide sequence ID" value="NC_005042.1"/>
</dbReference>
<dbReference type="RefSeq" id="WP_011125254.1">
    <property type="nucleotide sequence ID" value="NC_005042.1"/>
</dbReference>
<dbReference type="SMR" id="Q7VBJ0"/>
<dbReference type="STRING" id="167539.Pro_1102"/>
<dbReference type="EnsemblBacteria" id="AAQ00147">
    <property type="protein sequence ID" value="AAQ00147"/>
    <property type="gene ID" value="Pro_1102"/>
</dbReference>
<dbReference type="KEGG" id="pma:Pro_1102"/>
<dbReference type="PATRIC" id="fig|167539.5.peg.1152"/>
<dbReference type="eggNOG" id="COG0502">
    <property type="taxonomic scope" value="Bacteria"/>
</dbReference>
<dbReference type="HOGENOM" id="CLU_033172_1_2_3"/>
<dbReference type="OrthoDB" id="9786826at2"/>
<dbReference type="UniPathway" id="UPA00078">
    <property type="reaction ID" value="UER00162"/>
</dbReference>
<dbReference type="Proteomes" id="UP000001420">
    <property type="component" value="Chromosome"/>
</dbReference>
<dbReference type="GO" id="GO:0051537">
    <property type="term" value="F:2 iron, 2 sulfur cluster binding"/>
    <property type="evidence" value="ECO:0007669"/>
    <property type="project" value="UniProtKB-KW"/>
</dbReference>
<dbReference type="GO" id="GO:0051539">
    <property type="term" value="F:4 iron, 4 sulfur cluster binding"/>
    <property type="evidence" value="ECO:0007669"/>
    <property type="project" value="UniProtKB-KW"/>
</dbReference>
<dbReference type="GO" id="GO:0004076">
    <property type="term" value="F:biotin synthase activity"/>
    <property type="evidence" value="ECO:0007669"/>
    <property type="project" value="UniProtKB-UniRule"/>
</dbReference>
<dbReference type="GO" id="GO:0005506">
    <property type="term" value="F:iron ion binding"/>
    <property type="evidence" value="ECO:0007669"/>
    <property type="project" value="UniProtKB-UniRule"/>
</dbReference>
<dbReference type="GO" id="GO:0009102">
    <property type="term" value="P:biotin biosynthetic process"/>
    <property type="evidence" value="ECO:0007669"/>
    <property type="project" value="UniProtKB-UniRule"/>
</dbReference>
<dbReference type="CDD" id="cd01335">
    <property type="entry name" value="Radical_SAM"/>
    <property type="match status" value="1"/>
</dbReference>
<dbReference type="Gene3D" id="3.20.20.70">
    <property type="entry name" value="Aldolase class I"/>
    <property type="match status" value="1"/>
</dbReference>
<dbReference type="HAMAP" id="MF_01694">
    <property type="entry name" value="BioB"/>
    <property type="match status" value="1"/>
</dbReference>
<dbReference type="InterPro" id="IPR013785">
    <property type="entry name" value="Aldolase_TIM"/>
</dbReference>
<dbReference type="InterPro" id="IPR010722">
    <property type="entry name" value="BATS_dom"/>
</dbReference>
<dbReference type="InterPro" id="IPR002684">
    <property type="entry name" value="Biotin_synth/BioAB"/>
</dbReference>
<dbReference type="InterPro" id="IPR024177">
    <property type="entry name" value="Biotin_synthase"/>
</dbReference>
<dbReference type="InterPro" id="IPR006638">
    <property type="entry name" value="Elp3/MiaA/NifB-like_rSAM"/>
</dbReference>
<dbReference type="InterPro" id="IPR007197">
    <property type="entry name" value="rSAM"/>
</dbReference>
<dbReference type="NCBIfam" id="TIGR00433">
    <property type="entry name" value="bioB"/>
    <property type="match status" value="1"/>
</dbReference>
<dbReference type="PANTHER" id="PTHR22976">
    <property type="entry name" value="BIOTIN SYNTHASE"/>
    <property type="match status" value="1"/>
</dbReference>
<dbReference type="PANTHER" id="PTHR22976:SF2">
    <property type="entry name" value="BIOTIN SYNTHASE, MITOCHONDRIAL"/>
    <property type="match status" value="1"/>
</dbReference>
<dbReference type="Pfam" id="PF06968">
    <property type="entry name" value="BATS"/>
    <property type="match status" value="1"/>
</dbReference>
<dbReference type="Pfam" id="PF04055">
    <property type="entry name" value="Radical_SAM"/>
    <property type="match status" value="1"/>
</dbReference>
<dbReference type="PIRSF" id="PIRSF001619">
    <property type="entry name" value="Biotin_synth"/>
    <property type="match status" value="1"/>
</dbReference>
<dbReference type="SFLD" id="SFLDF00272">
    <property type="entry name" value="biotin_synthase"/>
    <property type="match status" value="1"/>
</dbReference>
<dbReference type="SFLD" id="SFLDS00029">
    <property type="entry name" value="Radical_SAM"/>
    <property type="match status" value="1"/>
</dbReference>
<dbReference type="SMART" id="SM00876">
    <property type="entry name" value="BATS"/>
    <property type="match status" value="1"/>
</dbReference>
<dbReference type="SMART" id="SM00729">
    <property type="entry name" value="Elp3"/>
    <property type="match status" value="1"/>
</dbReference>
<dbReference type="SUPFAM" id="SSF102114">
    <property type="entry name" value="Radical SAM enzymes"/>
    <property type="match status" value="1"/>
</dbReference>
<dbReference type="PROSITE" id="PS51918">
    <property type="entry name" value="RADICAL_SAM"/>
    <property type="match status" value="1"/>
</dbReference>
<gene>
    <name evidence="1" type="primary">bioB</name>
    <name type="ordered locus">Pro_1102</name>
</gene>
<comment type="function">
    <text evidence="1">Catalyzes the conversion of dethiobiotin (DTB) to biotin by the insertion of a sulfur atom into dethiobiotin via a radical-based mechanism.</text>
</comment>
<comment type="catalytic activity">
    <reaction evidence="1">
        <text>(4R,5S)-dethiobiotin + (sulfur carrier)-SH + 2 reduced [2Fe-2S]-[ferredoxin] + 2 S-adenosyl-L-methionine = (sulfur carrier)-H + biotin + 2 5'-deoxyadenosine + 2 L-methionine + 2 oxidized [2Fe-2S]-[ferredoxin]</text>
        <dbReference type="Rhea" id="RHEA:22060"/>
        <dbReference type="Rhea" id="RHEA-COMP:10000"/>
        <dbReference type="Rhea" id="RHEA-COMP:10001"/>
        <dbReference type="Rhea" id="RHEA-COMP:14737"/>
        <dbReference type="Rhea" id="RHEA-COMP:14739"/>
        <dbReference type="ChEBI" id="CHEBI:17319"/>
        <dbReference type="ChEBI" id="CHEBI:29917"/>
        <dbReference type="ChEBI" id="CHEBI:33737"/>
        <dbReference type="ChEBI" id="CHEBI:33738"/>
        <dbReference type="ChEBI" id="CHEBI:57586"/>
        <dbReference type="ChEBI" id="CHEBI:57844"/>
        <dbReference type="ChEBI" id="CHEBI:59789"/>
        <dbReference type="ChEBI" id="CHEBI:64428"/>
        <dbReference type="ChEBI" id="CHEBI:149473"/>
        <dbReference type="EC" id="2.8.1.6"/>
    </reaction>
</comment>
<comment type="cofactor">
    <cofactor evidence="1">
        <name>[4Fe-4S] cluster</name>
        <dbReference type="ChEBI" id="CHEBI:49883"/>
    </cofactor>
    <text evidence="1">Binds 1 [4Fe-4S] cluster. The cluster is coordinated with 3 cysteines and an exchangeable S-adenosyl-L-methionine.</text>
</comment>
<comment type="cofactor">
    <cofactor evidence="1">
        <name>[2Fe-2S] cluster</name>
        <dbReference type="ChEBI" id="CHEBI:190135"/>
    </cofactor>
    <text evidence="1">Binds 1 [2Fe-2S] cluster. The cluster is coordinated with 3 cysteines and 1 arginine.</text>
</comment>
<comment type="pathway">
    <text evidence="1">Cofactor biosynthesis; biotin biosynthesis; biotin from 7,8-diaminononanoate: step 2/2.</text>
</comment>
<comment type="subunit">
    <text evidence="1">Homodimer.</text>
</comment>
<comment type="similarity">
    <text evidence="1">Belongs to the radical SAM superfamily. Biotin synthase family.</text>
</comment>
<sequence length="332" mass="36799">MTLLNPNIPIRQEVKVRFDWSLEEIQEILEKPLFELLWEAQNVHRSVNPEYKVQLASLLSVKTGGCEEDCSYCSQSIYNSSDVTNQSDFDVKGVLEQAKAAKAAGADRFCMGWAWREIRDGKPFEAMLDMVRGVKELGLEACVTGGMLTNQQAARLAEVGLNAYNHNLDTSPEHYDKIISTRTYQDRLETLHRVRNAGITICCGGIIGMGETLKDRASLLRVLANMDPHPESVPINALVPVEGTPLENLSMVDPLEMVRMVATARILMPRSRVRLSAGREQLGKEAQILCLLAGADSIFYGDTLLTTSNPSIKADRELLASAGVSVNWDLYD</sequence>
<evidence type="ECO:0000255" key="1">
    <source>
        <dbReference type="HAMAP-Rule" id="MF_01694"/>
    </source>
</evidence>
<evidence type="ECO:0000255" key="2">
    <source>
        <dbReference type="PROSITE-ProRule" id="PRU01266"/>
    </source>
</evidence>
<feature type="chain" id="PRO_0000381543" description="Biotin synthase">
    <location>
        <begin position="1"/>
        <end position="332"/>
    </location>
</feature>
<feature type="domain" description="Radical SAM core" evidence="2">
    <location>
        <begin position="51"/>
        <end position="279"/>
    </location>
</feature>
<feature type="binding site" evidence="1">
    <location>
        <position position="66"/>
    </location>
    <ligand>
        <name>[4Fe-4S] cluster</name>
        <dbReference type="ChEBI" id="CHEBI:49883"/>
        <note>4Fe-4S-S-AdoMet</note>
    </ligand>
</feature>
<feature type="binding site" evidence="1">
    <location>
        <position position="70"/>
    </location>
    <ligand>
        <name>[4Fe-4S] cluster</name>
        <dbReference type="ChEBI" id="CHEBI:49883"/>
        <note>4Fe-4S-S-AdoMet</note>
    </ligand>
</feature>
<feature type="binding site" evidence="1">
    <location>
        <position position="73"/>
    </location>
    <ligand>
        <name>[4Fe-4S] cluster</name>
        <dbReference type="ChEBI" id="CHEBI:49883"/>
        <note>4Fe-4S-S-AdoMet</note>
    </ligand>
</feature>
<feature type="binding site" evidence="1">
    <location>
        <position position="110"/>
    </location>
    <ligand>
        <name>[2Fe-2S] cluster</name>
        <dbReference type="ChEBI" id="CHEBI:190135"/>
    </ligand>
</feature>
<feature type="binding site" evidence="1">
    <location>
        <position position="142"/>
    </location>
    <ligand>
        <name>[2Fe-2S] cluster</name>
        <dbReference type="ChEBI" id="CHEBI:190135"/>
    </ligand>
</feature>
<feature type="binding site" evidence="1">
    <location>
        <position position="202"/>
    </location>
    <ligand>
        <name>[2Fe-2S] cluster</name>
        <dbReference type="ChEBI" id="CHEBI:190135"/>
    </ligand>
</feature>
<feature type="binding site" evidence="1">
    <location>
        <position position="274"/>
    </location>
    <ligand>
        <name>[2Fe-2S] cluster</name>
        <dbReference type="ChEBI" id="CHEBI:190135"/>
    </ligand>
</feature>
<protein>
    <recommendedName>
        <fullName evidence="1">Biotin synthase</fullName>
        <ecNumber evidence="1">2.8.1.6</ecNumber>
    </recommendedName>
</protein>
<name>BIOB_PROMA</name>
<proteinExistence type="inferred from homology"/>
<keyword id="KW-0001">2Fe-2S</keyword>
<keyword id="KW-0004">4Fe-4S</keyword>
<keyword id="KW-0093">Biotin biosynthesis</keyword>
<keyword id="KW-0408">Iron</keyword>
<keyword id="KW-0411">Iron-sulfur</keyword>
<keyword id="KW-0479">Metal-binding</keyword>
<keyword id="KW-1185">Reference proteome</keyword>
<keyword id="KW-0949">S-adenosyl-L-methionine</keyword>
<keyword id="KW-0808">Transferase</keyword>
<accession>Q7VBJ0</accession>
<reference key="1">
    <citation type="journal article" date="2003" name="Proc. Natl. Acad. Sci. U.S.A.">
        <title>Genome sequence of the cyanobacterium Prochlorococcus marinus SS120, a nearly minimal oxyphototrophic genome.</title>
        <authorList>
            <person name="Dufresne A."/>
            <person name="Salanoubat M."/>
            <person name="Partensky F."/>
            <person name="Artiguenave F."/>
            <person name="Axmann I.M."/>
            <person name="Barbe V."/>
            <person name="Duprat S."/>
            <person name="Galperin M.Y."/>
            <person name="Koonin E.V."/>
            <person name="Le Gall F."/>
            <person name="Makarova K.S."/>
            <person name="Ostrowski M."/>
            <person name="Oztas S."/>
            <person name="Robert C."/>
            <person name="Rogozin I.B."/>
            <person name="Scanlan D.J."/>
            <person name="Tandeau de Marsac N."/>
            <person name="Weissenbach J."/>
            <person name="Wincker P."/>
            <person name="Wolf Y.I."/>
            <person name="Hess W.R."/>
        </authorList>
    </citation>
    <scope>NUCLEOTIDE SEQUENCE [LARGE SCALE GENOMIC DNA]</scope>
    <source>
        <strain>SARG / CCMP1375 / SS120</strain>
    </source>
</reference>
<organism>
    <name type="scientific">Prochlorococcus marinus (strain SARG / CCMP1375 / SS120)</name>
    <dbReference type="NCBI Taxonomy" id="167539"/>
    <lineage>
        <taxon>Bacteria</taxon>
        <taxon>Bacillati</taxon>
        <taxon>Cyanobacteriota</taxon>
        <taxon>Cyanophyceae</taxon>
        <taxon>Synechococcales</taxon>
        <taxon>Prochlorococcaceae</taxon>
        <taxon>Prochlorococcus</taxon>
    </lineage>
</organism>